<keyword id="KW-0235">DNA replication</keyword>
<keyword id="KW-0238">DNA-binding</keyword>
<keyword id="KW-0496">Mitochondrion</keyword>
<keyword id="KW-1135">Mitochondrion nucleoid</keyword>
<keyword id="KW-1185">Reference proteome</keyword>
<keyword id="KW-0809">Transit peptide</keyword>
<sequence length="485" mass="54663">MRSAPAIRACQRICRCLLSGFGGQVDGRQPEQLSKGTGSFVGPVRSQAELPRNEPREAPESGGEGSEPLVEICRKRRFLSGTKQQLSRDSLLNGCHPGLGPLGIELRKNLAAEWWSSVVVFREQVFPVDALHREPGPSLPVDNGFRLVSAETLREILQDKELSKEQLVAFLENLLNTSGKLRENLLHGALEHYVSYLDLVNKRLPFGLAQIGACFHPVSDTKQTPDGVKRIGEKTEASLVWFTSARTASQWLDFWLRHRLLWWRKFAMSPSNFSSGDCQDEAGRKGNRLYYNFPWGKEPIETLWNLGDHELLHMYPGSVAQVHGRDGRKNVVPSVLSINGDLDRGMLAYLYDSFQLTENSFTRKKDLHRKVLKLHPCLAPIKAALDVGRGPTVELRQVCQGLFNELLENGISVWPGYLETVQSSLEQLYSKYDEMSILFTVLITEATLENGLIQLRSRDTTMKEMMHISKVKDFLTKYISSAKNV</sequence>
<comment type="function">
    <text evidence="2">Accessory subunit of DNA polymerase gamma solely responsible for replication of mitochondrial DNA (mtDNA). Acts as an allosteric regulator of the holoenzyme activities. Enhances the polymerase activity and the processivity of POLG by increasing its interactions with the DNA template. Suppresses POLG exonucleolytic proofreading especially toward homopolymeric templates bearing mismatched termini. Binds to single-stranded DNA.</text>
</comment>
<comment type="subunit">
    <text evidence="2">Heterotrimer composed of a catalytic subunit and a homodimer of accessory subunits (POLG:POLG2).</text>
</comment>
<comment type="subcellular location">
    <subcellularLocation>
        <location evidence="1">Mitochondrion</location>
    </subcellularLocation>
    <subcellularLocation>
        <location evidence="1">Mitochondrion matrix</location>
        <location evidence="1">Mitochondrion nucleoid</location>
    </subcellularLocation>
</comment>
<feature type="transit peptide" description="Mitochondrion" evidence="3">
    <location>
        <begin position="1"/>
        <end status="unknown"/>
    </location>
</feature>
<feature type="chain" id="PRO_0000285578" description="DNA polymerase subunit gamma-2">
    <location>
        <begin status="unknown"/>
        <end position="485"/>
    </location>
</feature>
<feature type="region of interest" description="Disordered" evidence="4">
    <location>
        <begin position="28"/>
        <end position="67"/>
    </location>
</feature>
<protein>
    <recommendedName>
        <fullName>DNA polymerase subunit gamma-2</fullName>
    </recommendedName>
    <alternativeName>
        <fullName>Mitochondrial DNA polymerase accessory subunit</fullName>
    </alternativeName>
    <alternativeName>
        <fullName>MtPolB</fullName>
    </alternativeName>
    <alternativeName>
        <fullName>PolG-beta</fullName>
    </alternativeName>
</protein>
<accession>Q0VC30</accession>
<evidence type="ECO:0000250" key="1">
    <source>
        <dbReference type="UniProtKB" id="P54098"/>
    </source>
</evidence>
<evidence type="ECO:0000250" key="2">
    <source>
        <dbReference type="UniProtKB" id="Q9UHN1"/>
    </source>
</evidence>
<evidence type="ECO:0000255" key="3"/>
<evidence type="ECO:0000256" key="4">
    <source>
        <dbReference type="SAM" id="MobiDB-lite"/>
    </source>
</evidence>
<reference key="1">
    <citation type="submission" date="2006-08" db="EMBL/GenBank/DDBJ databases">
        <authorList>
            <consortium name="NIH - Mammalian Gene Collection (MGC) project"/>
        </authorList>
    </citation>
    <scope>NUCLEOTIDE SEQUENCE [LARGE SCALE MRNA]</scope>
    <source>
        <strain>Hereford</strain>
        <tissue>Fetal skin</tissue>
    </source>
</reference>
<name>DPOG2_BOVIN</name>
<organism>
    <name type="scientific">Bos taurus</name>
    <name type="common">Bovine</name>
    <dbReference type="NCBI Taxonomy" id="9913"/>
    <lineage>
        <taxon>Eukaryota</taxon>
        <taxon>Metazoa</taxon>
        <taxon>Chordata</taxon>
        <taxon>Craniata</taxon>
        <taxon>Vertebrata</taxon>
        <taxon>Euteleostomi</taxon>
        <taxon>Mammalia</taxon>
        <taxon>Eutheria</taxon>
        <taxon>Laurasiatheria</taxon>
        <taxon>Artiodactyla</taxon>
        <taxon>Ruminantia</taxon>
        <taxon>Pecora</taxon>
        <taxon>Bovidae</taxon>
        <taxon>Bovinae</taxon>
        <taxon>Bos</taxon>
    </lineage>
</organism>
<proteinExistence type="evidence at transcript level"/>
<dbReference type="EMBL" id="BC120380">
    <property type="protein sequence ID" value="AAI20381.1"/>
    <property type="molecule type" value="mRNA"/>
</dbReference>
<dbReference type="RefSeq" id="NP_001068659.1">
    <property type="nucleotide sequence ID" value="NM_001075191.1"/>
</dbReference>
<dbReference type="SMR" id="Q0VC30"/>
<dbReference type="FunCoup" id="Q0VC30">
    <property type="interactions" value="1352"/>
</dbReference>
<dbReference type="STRING" id="9913.ENSBTAP00000024509"/>
<dbReference type="PaxDb" id="9913-ENSBTAP00000024509"/>
<dbReference type="GeneID" id="505152"/>
<dbReference type="KEGG" id="bta:505152"/>
<dbReference type="CTD" id="11232"/>
<dbReference type="VEuPathDB" id="HostDB:ENSBTAG00000018420"/>
<dbReference type="eggNOG" id="KOG2298">
    <property type="taxonomic scope" value="Eukaryota"/>
</dbReference>
<dbReference type="HOGENOM" id="CLU_055833_0_0_1"/>
<dbReference type="InParanoid" id="Q0VC30"/>
<dbReference type="OMA" id="WGQEVLE"/>
<dbReference type="OrthoDB" id="57698at2759"/>
<dbReference type="TreeFam" id="TF103005"/>
<dbReference type="Reactome" id="R-BTA-9913635">
    <property type="pathway name" value="Strand-asynchronous mitochondrial DNA replication"/>
</dbReference>
<dbReference type="Proteomes" id="UP000009136">
    <property type="component" value="Chromosome 19"/>
</dbReference>
<dbReference type="Bgee" id="ENSBTAG00000018420">
    <property type="expression patterns" value="Expressed in oocyte and 105 other cell types or tissues"/>
</dbReference>
<dbReference type="GO" id="GO:0005737">
    <property type="term" value="C:cytoplasm"/>
    <property type="evidence" value="ECO:0000318"/>
    <property type="project" value="GO_Central"/>
</dbReference>
<dbReference type="GO" id="GO:0005760">
    <property type="term" value="C:gamma DNA polymerase complex"/>
    <property type="evidence" value="ECO:0000250"/>
    <property type="project" value="UniProtKB"/>
</dbReference>
<dbReference type="GO" id="GO:0042645">
    <property type="term" value="C:mitochondrial nucleoid"/>
    <property type="evidence" value="ECO:0007669"/>
    <property type="project" value="UniProtKB-SubCell"/>
</dbReference>
<dbReference type="GO" id="GO:0005739">
    <property type="term" value="C:mitochondrion"/>
    <property type="evidence" value="ECO:0000318"/>
    <property type="project" value="GO_Central"/>
</dbReference>
<dbReference type="GO" id="GO:0003677">
    <property type="term" value="F:DNA binding"/>
    <property type="evidence" value="ECO:0007669"/>
    <property type="project" value="UniProtKB-KW"/>
</dbReference>
<dbReference type="GO" id="GO:0030337">
    <property type="term" value="F:DNA polymerase processivity factor activity"/>
    <property type="evidence" value="ECO:0000250"/>
    <property type="project" value="UniProtKB"/>
</dbReference>
<dbReference type="GO" id="GO:0006264">
    <property type="term" value="P:mitochondrial DNA replication"/>
    <property type="evidence" value="ECO:0000318"/>
    <property type="project" value="GO_Central"/>
</dbReference>
<dbReference type="CDD" id="cd02426">
    <property type="entry name" value="Pol_gamma_b_Cterm"/>
    <property type="match status" value="1"/>
</dbReference>
<dbReference type="FunFam" id="3.40.50.800:FF:000014">
    <property type="entry name" value="Putative dna polymerase subunit gamma-2 mitochondrial"/>
    <property type="match status" value="1"/>
</dbReference>
<dbReference type="Gene3D" id="3.40.50.800">
    <property type="entry name" value="Anticodon-binding domain"/>
    <property type="match status" value="1"/>
</dbReference>
<dbReference type="Gene3D" id="3.30.930.10">
    <property type="entry name" value="Bira Bifunctional Protein, Domain 2"/>
    <property type="match status" value="1"/>
</dbReference>
<dbReference type="InterPro" id="IPR045864">
    <property type="entry name" value="aa-tRNA-synth_II/BPL/LPL"/>
</dbReference>
<dbReference type="InterPro" id="IPR004154">
    <property type="entry name" value="Anticodon-bd"/>
</dbReference>
<dbReference type="InterPro" id="IPR036621">
    <property type="entry name" value="Anticodon-bd_dom_sf"/>
</dbReference>
<dbReference type="InterPro" id="IPR027031">
    <property type="entry name" value="Gly-tRNA_synthase/POLG2"/>
</dbReference>
<dbReference type="InterPro" id="IPR042064">
    <property type="entry name" value="POLG2_C"/>
</dbReference>
<dbReference type="PANTHER" id="PTHR10745:SF8">
    <property type="entry name" value="DNA POLYMERASE SUBUNIT GAMMA-2, MITOCHONDRIAL"/>
    <property type="match status" value="1"/>
</dbReference>
<dbReference type="PANTHER" id="PTHR10745">
    <property type="entry name" value="GLYCYL-TRNA SYNTHETASE/DNA POLYMERASE SUBUNIT GAMMA-2"/>
    <property type="match status" value="1"/>
</dbReference>
<dbReference type="Pfam" id="PF03129">
    <property type="entry name" value="HGTP_anticodon"/>
    <property type="match status" value="1"/>
</dbReference>
<dbReference type="SUPFAM" id="SSF52954">
    <property type="entry name" value="Class II aaRS ABD-related"/>
    <property type="match status" value="1"/>
</dbReference>
<dbReference type="SUPFAM" id="SSF55681">
    <property type="entry name" value="Class II aaRS and biotin synthetases"/>
    <property type="match status" value="1"/>
</dbReference>
<gene>
    <name type="primary">POLG2</name>
    <name type="synonym">MTPOLB</name>
</gene>